<feature type="chain" id="PRO_1000056643" description="Ribosomal RNA small subunit methyltransferase A">
    <location>
        <begin position="1"/>
        <end position="256"/>
    </location>
</feature>
<feature type="binding site" evidence="1">
    <location>
        <position position="12"/>
    </location>
    <ligand>
        <name>S-adenosyl-L-methionine</name>
        <dbReference type="ChEBI" id="CHEBI:59789"/>
    </ligand>
</feature>
<feature type="binding site" evidence="1">
    <location>
        <position position="14"/>
    </location>
    <ligand>
        <name>S-adenosyl-L-methionine</name>
        <dbReference type="ChEBI" id="CHEBI:59789"/>
    </ligand>
</feature>
<feature type="binding site" evidence="1">
    <location>
        <position position="39"/>
    </location>
    <ligand>
        <name>S-adenosyl-L-methionine</name>
        <dbReference type="ChEBI" id="CHEBI:59789"/>
    </ligand>
</feature>
<feature type="binding site" evidence="1">
    <location>
        <position position="60"/>
    </location>
    <ligand>
        <name>S-adenosyl-L-methionine</name>
        <dbReference type="ChEBI" id="CHEBI:59789"/>
    </ligand>
</feature>
<feature type="binding site" evidence="1">
    <location>
        <position position="83"/>
    </location>
    <ligand>
        <name>S-adenosyl-L-methionine</name>
        <dbReference type="ChEBI" id="CHEBI:59789"/>
    </ligand>
</feature>
<feature type="binding site" evidence="1">
    <location>
        <position position="101"/>
    </location>
    <ligand>
        <name>S-adenosyl-L-methionine</name>
        <dbReference type="ChEBI" id="CHEBI:59789"/>
    </ligand>
</feature>
<sequence>MRHIPRRRFGQHFLVDHHIIAEIIHIICPLPGDRMIEIGPGLGALTQPLLNNLDTLQAIELDRDIVDYLSRNYAEKLVIHNVDALKFDFSALGEGLRIVGNLPYNISTPLLFHLSRFSNLIIDMHFMLQLEVVERMVAQPSTPDYGRLSLMLQNRFEMEQMLIVPAEAFNPPPRVQSAIVCMRPRVVPVIPFGLEKLFGEMVLAAFSQRRKTLRNTLRHYLTIKDFDQLRIDPGLRAENLSLEQYSAITRHIHKIR</sequence>
<evidence type="ECO:0000255" key="1">
    <source>
        <dbReference type="HAMAP-Rule" id="MF_00607"/>
    </source>
</evidence>
<protein>
    <recommendedName>
        <fullName evidence="1">Ribosomal RNA small subunit methyltransferase A</fullName>
        <ecNumber evidence="1">2.1.1.182</ecNumber>
    </recommendedName>
    <alternativeName>
        <fullName evidence="1">16S rRNA (adenine(1518)-N(6)/adenine(1519)-N(6))-dimethyltransferase</fullName>
    </alternativeName>
    <alternativeName>
        <fullName evidence="1">16S rRNA dimethyladenosine transferase</fullName>
    </alternativeName>
    <alternativeName>
        <fullName evidence="1">16S rRNA dimethylase</fullName>
    </alternativeName>
    <alternativeName>
        <fullName evidence="1">S-adenosylmethionine-6-N', N'-adenosyl(rRNA) dimethyltransferase</fullName>
    </alternativeName>
</protein>
<proteinExistence type="inferred from homology"/>
<dbReference type="EC" id="2.1.1.182" evidence="1"/>
<dbReference type="EMBL" id="CP000450">
    <property type="protein sequence ID" value="ABI59474.1"/>
    <property type="molecule type" value="Genomic_DNA"/>
</dbReference>
<dbReference type="RefSeq" id="WP_011634294.1">
    <property type="nucleotide sequence ID" value="NC_008344.1"/>
</dbReference>
<dbReference type="SMR" id="Q0AGQ8"/>
<dbReference type="STRING" id="335283.Neut_1219"/>
<dbReference type="KEGG" id="net:Neut_1219"/>
<dbReference type="eggNOG" id="COG0030">
    <property type="taxonomic scope" value="Bacteria"/>
</dbReference>
<dbReference type="HOGENOM" id="CLU_041220_0_1_4"/>
<dbReference type="OrthoDB" id="9814755at2"/>
<dbReference type="Proteomes" id="UP000001966">
    <property type="component" value="Chromosome"/>
</dbReference>
<dbReference type="GO" id="GO:0005829">
    <property type="term" value="C:cytosol"/>
    <property type="evidence" value="ECO:0007669"/>
    <property type="project" value="TreeGrafter"/>
</dbReference>
<dbReference type="GO" id="GO:0052908">
    <property type="term" value="F:16S rRNA (adenine(1518)-N(6)/adenine(1519)-N(6))-dimethyltransferase activity"/>
    <property type="evidence" value="ECO:0007669"/>
    <property type="project" value="UniProtKB-EC"/>
</dbReference>
<dbReference type="GO" id="GO:0003723">
    <property type="term" value="F:RNA binding"/>
    <property type="evidence" value="ECO:0007669"/>
    <property type="project" value="UniProtKB-KW"/>
</dbReference>
<dbReference type="FunFam" id="1.10.8.100:FF:000001">
    <property type="entry name" value="Ribosomal RNA small subunit methyltransferase A"/>
    <property type="match status" value="1"/>
</dbReference>
<dbReference type="Gene3D" id="1.10.8.100">
    <property type="entry name" value="Ribosomal RNA adenine dimethylase-like, domain 2"/>
    <property type="match status" value="1"/>
</dbReference>
<dbReference type="Gene3D" id="3.40.50.150">
    <property type="entry name" value="Vaccinia Virus protein VP39"/>
    <property type="match status" value="1"/>
</dbReference>
<dbReference type="HAMAP" id="MF_00607">
    <property type="entry name" value="16SrRNA_methyltr_A"/>
    <property type="match status" value="1"/>
</dbReference>
<dbReference type="InterPro" id="IPR001737">
    <property type="entry name" value="KsgA/Erm"/>
</dbReference>
<dbReference type="InterPro" id="IPR023165">
    <property type="entry name" value="rRNA_Ade_diMease-like_C"/>
</dbReference>
<dbReference type="InterPro" id="IPR020596">
    <property type="entry name" value="rRNA_Ade_Mease_Trfase_CS"/>
</dbReference>
<dbReference type="InterPro" id="IPR020598">
    <property type="entry name" value="rRNA_Ade_methylase_Trfase_N"/>
</dbReference>
<dbReference type="InterPro" id="IPR011530">
    <property type="entry name" value="rRNA_adenine_dimethylase"/>
</dbReference>
<dbReference type="InterPro" id="IPR029063">
    <property type="entry name" value="SAM-dependent_MTases_sf"/>
</dbReference>
<dbReference type="NCBIfam" id="TIGR00755">
    <property type="entry name" value="ksgA"/>
    <property type="match status" value="1"/>
</dbReference>
<dbReference type="PANTHER" id="PTHR11727">
    <property type="entry name" value="DIMETHYLADENOSINE TRANSFERASE"/>
    <property type="match status" value="1"/>
</dbReference>
<dbReference type="PANTHER" id="PTHR11727:SF7">
    <property type="entry name" value="DIMETHYLADENOSINE TRANSFERASE-RELATED"/>
    <property type="match status" value="1"/>
</dbReference>
<dbReference type="Pfam" id="PF00398">
    <property type="entry name" value="RrnaAD"/>
    <property type="match status" value="1"/>
</dbReference>
<dbReference type="SMART" id="SM00650">
    <property type="entry name" value="rADc"/>
    <property type="match status" value="1"/>
</dbReference>
<dbReference type="SUPFAM" id="SSF53335">
    <property type="entry name" value="S-adenosyl-L-methionine-dependent methyltransferases"/>
    <property type="match status" value="1"/>
</dbReference>
<dbReference type="PROSITE" id="PS01131">
    <property type="entry name" value="RRNA_A_DIMETH"/>
    <property type="match status" value="1"/>
</dbReference>
<dbReference type="PROSITE" id="PS51689">
    <property type="entry name" value="SAM_RNA_A_N6_MT"/>
    <property type="match status" value="1"/>
</dbReference>
<gene>
    <name evidence="1" type="primary">rsmA</name>
    <name evidence="1" type="synonym">ksgA</name>
    <name type="ordered locus">Neut_1219</name>
</gene>
<keyword id="KW-0963">Cytoplasm</keyword>
<keyword id="KW-0489">Methyltransferase</keyword>
<keyword id="KW-0694">RNA-binding</keyword>
<keyword id="KW-0698">rRNA processing</keyword>
<keyword id="KW-0949">S-adenosyl-L-methionine</keyword>
<keyword id="KW-0808">Transferase</keyword>
<name>RSMA_NITEC</name>
<accession>Q0AGQ8</accession>
<reference key="1">
    <citation type="journal article" date="2007" name="Environ. Microbiol.">
        <title>Whole-genome analysis of the ammonia-oxidizing bacterium, Nitrosomonas eutropha C91: implications for niche adaptation.</title>
        <authorList>
            <person name="Stein L.Y."/>
            <person name="Arp D.J."/>
            <person name="Berube P.M."/>
            <person name="Chain P.S."/>
            <person name="Hauser L."/>
            <person name="Jetten M.S."/>
            <person name="Klotz M.G."/>
            <person name="Larimer F.W."/>
            <person name="Norton J.M."/>
            <person name="Op den Camp H.J.M."/>
            <person name="Shin M."/>
            <person name="Wei X."/>
        </authorList>
    </citation>
    <scope>NUCLEOTIDE SEQUENCE [LARGE SCALE GENOMIC DNA]</scope>
    <source>
        <strain>DSM 101675 / C91 / Nm57</strain>
    </source>
</reference>
<organism>
    <name type="scientific">Nitrosomonas eutropha (strain DSM 101675 / C91 / Nm57)</name>
    <dbReference type="NCBI Taxonomy" id="335283"/>
    <lineage>
        <taxon>Bacteria</taxon>
        <taxon>Pseudomonadati</taxon>
        <taxon>Pseudomonadota</taxon>
        <taxon>Betaproteobacteria</taxon>
        <taxon>Nitrosomonadales</taxon>
        <taxon>Nitrosomonadaceae</taxon>
        <taxon>Nitrosomonas</taxon>
    </lineage>
</organism>
<comment type="function">
    <text evidence="1">Specifically dimethylates two adjacent adenosines (A1518 and A1519) in the loop of a conserved hairpin near the 3'-end of 16S rRNA in the 30S particle. May play a critical role in biogenesis of 30S subunits.</text>
</comment>
<comment type="catalytic activity">
    <reaction evidence="1">
        <text>adenosine(1518)/adenosine(1519) in 16S rRNA + 4 S-adenosyl-L-methionine = N(6)-dimethyladenosine(1518)/N(6)-dimethyladenosine(1519) in 16S rRNA + 4 S-adenosyl-L-homocysteine + 4 H(+)</text>
        <dbReference type="Rhea" id="RHEA:19609"/>
        <dbReference type="Rhea" id="RHEA-COMP:10232"/>
        <dbReference type="Rhea" id="RHEA-COMP:10233"/>
        <dbReference type="ChEBI" id="CHEBI:15378"/>
        <dbReference type="ChEBI" id="CHEBI:57856"/>
        <dbReference type="ChEBI" id="CHEBI:59789"/>
        <dbReference type="ChEBI" id="CHEBI:74411"/>
        <dbReference type="ChEBI" id="CHEBI:74493"/>
        <dbReference type="EC" id="2.1.1.182"/>
    </reaction>
</comment>
<comment type="subcellular location">
    <subcellularLocation>
        <location evidence="1">Cytoplasm</location>
    </subcellularLocation>
</comment>
<comment type="similarity">
    <text evidence="1">Belongs to the class I-like SAM-binding methyltransferase superfamily. rRNA adenine N(6)-methyltransferase family. RsmA subfamily.</text>
</comment>